<comment type="function">
    <text evidence="1">Transfers a succinyl group from succinyl-CoA to L-homoserine, forming succinyl-L-homoserine.</text>
</comment>
<comment type="catalytic activity">
    <reaction evidence="1">
        <text>L-homoserine + succinyl-CoA = O-succinyl-L-homoserine + CoA</text>
        <dbReference type="Rhea" id="RHEA:22008"/>
        <dbReference type="ChEBI" id="CHEBI:57287"/>
        <dbReference type="ChEBI" id="CHEBI:57292"/>
        <dbReference type="ChEBI" id="CHEBI:57476"/>
        <dbReference type="ChEBI" id="CHEBI:57661"/>
        <dbReference type="EC" id="2.3.1.46"/>
    </reaction>
</comment>
<comment type="pathway">
    <text evidence="1">Amino-acid biosynthesis; L-methionine biosynthesis via de novo pathway; O-succinyl-L-homoserine from L-homoserine: step 1/1.</text>
</comment>
<comment type="subunit">
    <text evidence="1">Homodimer.</text>
</comment>
<comment type="subcellular location">
    <subcellularLocation>
        <location evidence="1">Cytoplasm</location>
    </subcellularLocation>
</comment>
<comment type="similarity">
    <text evidence="1">Belongs to the AB hydrolase superfamily. MetX family.</text>
</comment>
<gene>
    <name evidence="1" type="primary">metXS</name>
    <name type="ordered locus">CJA_0119</name>
</gene>
<keyword id="KW-0012">Acyltransferase</keyword>
<keyword id="KW-0028">Amino-acid biosynthesis</keyword>
<keyword id="KW-0963">Cytoplasm</keyword>
<keyword id="KW-0486">Methionine biosynthesis</keyword>
<keyword id="KW-1185">Reference proteome</keyword>
<keyword id="KW-0808">Transferase</keyword>
<organism>
    <name type="scientific">Cellvibrio japonicus (strain Ueda107)</name>
    <name type="common">Pseudomonas fluorescens subsp. cellulosa</name>
    <dbReference type="NCBI Taxonomy" id="498211"/>
    <lineage>
        <taxon>Bacteria</taxon>
        <taxon>Pseudomonadati</taxon>
        <taxon>Pseudomonadota</taxon>
        <taxon>Gammaproteobacteria</taxon>
        <taxon>Cellvibrionales</taxon>
        <taxon>Cellvibrionaceae</taxon>
        <taxon>Cellvibrio</taxon>
    </lineage>
</organism>
<protein>
    <recommendedName>
        <fullName evidence="1">Homoserine O-succinyltransferase</fullName>
        <shortName evidence="1">HST</shortName>
        <ecNumber evidence="1">2.3.1.46</ecNumber>
    </recommendedName>
    <alternativeName>
        <fullName evidence="1">Homoserine transsuccinylase</fullName>
        <shortName evidence="1">HTS</shortName>
    </alternativeName>
</protein>
<feature type="chain" id="PRO_1000115218" description="Homoserine O-succinyltransferase">
    <location>
        <begin position="1"/>
        <end position="380"/>
    </location>
</feature>
<feature type="domain" description="AB hydrolase-1" evidence="1">
    <location>
        <begin position="51"/>
        <end position="362"/>
    </location>
</feature>
<feature type="active site" description="Nucleophile" evidence="1">
    <location>
        <position position="157"/>
    </location>
</feature>
<feature type="active site" evidence="1">
    <location>
        <position position="324"/>
    </location>
</feature>
<feature type="active site" evidence="1">
    <location>
        <position position="357"/>
    </location>
</feature>
<feature type="binding site" evidence="1">
    <location>
        <position position="227"/>
    </location>
    <ligand>
        <name>substrate</name>
    </ligand>
</feature>
<feature type="binding site" evidence="1">
    <location>
        <position position="358"/>
    </location>
    <ligand>
        <name>substrate</name>
    </ligand>
</feature>
<feature type="site" description="Important for acyl-CoA specificity" evidence="1">
    <location>
        <position position="326"/>
    </location>
</feature>
<accession>B3PFK3</accession>
<reference key="1">
    <citation type="journal article" date="2008" name="J. Bacteriol.">
        <title>Insights into plant cell wall degradation from the genome sequence of the soil bacterium Cellvibrio japonicus.</title>
        <authorList>
            <person name="DeBoy R.T."/>
            <person name="Mongodin E.F."/>
            <person name="Fouts D.E."/>
            <person name="Tailford L.E."/>
            <person name="Khouri H."/>
            <person name="Emerson J.B."/>
            <person name="Mohamoud Y."/>
            <person name="Watkins K."/>
            <person name="Henrissat B."/>
            <person name="Gilbert H.J."/>
            <person name="Nelson K.E."/>
        </authorList>
    </citation>
    <scope>NUCLEOTIDE SEQUENCE [LARGE SCALE GENOMIC DNA]</scope>
    <source>
        <strain>Ueda107</strain>
    </source>
</reference>
<sequence>MPNQLPADSVGLVTPQTLHFSEPLELACGISLNEYDLVYETYGQLNAAKSNAVLICHALSGHHHAAGYHRLEDKRPGWWDAYIGPGKPIDTNKFFVVALNNLGGCHGSTGPRSINPATGNVWGADFPMLRVRDWVASQARLADALGIDTWAAIIGGSLGGMQVMRWSIQYPQRVRYAVVIASAMKLSAQNIAFNEAARKAIISDPNFHNGDYLAHNTLPKNGLAVARMIGHITYLSDYAMGEKFGRDLRSGSFELGIAEPVEFQIESYLRYQGDSFAVSFDANSYIRITKALDYFDLAREYSDDPVLAFQGAQAKFLVVSFSTDWRFAPQRSREIVDALVGANKAVTYAEIESKHGHDAFLLPDARYEQVFKRYLASVEV</sequence>
<name>METXS_CELJU</name>
<proteinExistence type="inferred from homology"/>
<evidence type="ECO:0000255" key="1">
    <source>
        <dbReference type="HAMAP-Rule" id="MF_00296"/>
    </source>
</evidence>
<dbReference type="EC" id="2.3.1.46" evidence="1"/>
<dbReference type="EMBL" id="CP000934">
    <property type="protein sequence ID" value="ACE85938.1"/>
    <property type="molecule type" value="Genomic_DNA"/>
</dbReference>
<dbReference type="RefSeq" id="WP_012485802.1">
    <property type="nucleotide sequence ID" value="NC_010995.1"/>
</dbReference>
<dbReference type="SMR" id="B3PFK3"/>
<dbReference type="STRING" id="498211.CJA_0119"/>
<dbReference type="ESTHER" id="celju-metx">
    <property type="family name" value="Homoserine_transacetylase"/>
</dbReference>
<dbReference type="KEGG" id="cja:CJA_0119"/>
<dbReference type="eggNOG" id="COG2021">
    <property type="taxonomic scope" value="Bacteria"/>
</dbReference>
<dbReference type="HOGENOM" id="CLU_028760_1_2_6"/>
<dbReference type="OrthoDB" id="9800754at2"/>
<dbReference type="UniPathway" id="UPA00051">
    <property type="reaction ID" value="UER00075"/>
</dbReference>
<dbReference type="Proteomes" id="UP000001036">
    <property type="component" value="Chromosome"/>
</dbReference>
<dbReference type="GO" id="GO:0005737">
    <property type="term" value="C:cytoplasm"/>
    <property type="evidence" value="ECO:0007669"/>
    <property type="project" value="UniProtKB-SubCell"/>
</dbReference>
<dbReference type="GO" id="GO:0004414">
    <property type="term" value="F:homoserine O-acetyltransferase activity"/>
    <property type="evidence" value="ECO:0007669"/>
    <property type="project" value="TreeGrafter"/>
</dbReference>
<dbReference type="GO" id="GO:0008899">
    <property type="term" value="F:homoserine O-succinyltransferase activity"/>
    <property type="evidence" value="ECO:0007669"/>
    <property type="project" value="UniProtKB-UniRule"/>
</dbReference>
<dbReference type="GO" id="GO:0009092">
    <property type="term" value="P:homoserine metabolic process"/>
    <property type="evidence" value="ECO:0007669"/>
    <property type="project" value="TreeGrafter"/>
</dbReference>
<dbReference type="GO" id="GO:0009086">
    <property type="term" value="P:methionine biosynthetic process"/>
    <property type="evidence" value="ECO:0007669"/>
    <property type="project" value="UniProtKB-UniRule"/>
</dbReference>
<dbReference type="FunFam" id="1.10.1740.110:FF:000001">
    <property type="entry name" value="Homoserine O-acetyltransferase"/>
    <property type="match status" value="1"/>
</dbReference>
<dbReference type="Gene3D" id="1.10.1740.110">
    <property type="match status" value="1"/>
</dbReference>
<dbReference type="Gene3D" id="3.40.50.1820">
    <property type="entry name" value="alpha/beta hydrolase"/>
    <property type="match status" value="1"/>
</dbReference>
<dbReference type="HAMAP" id="MF_00296">
    <property type="entry name" value="MetX_acyltransf"/>
    <property type="match status" value="1"/>
</dbReference>
<dbReference type="InterPro" id="IPR000073">
    <property type="entry name" value="AB_hydrolase_1"/>
</dbReference>
<dbReference type="InterPro" id="IPR029058">
    <property type="entry name" value="AB_hydrolase_fold"/>
</dbReference>
<dbReference type="InterPro" id="IPR008220">
    <property type="entry name" value="HAT_MetX-like"/>
</dbReference>
<dbReference type="NCBIfam" id="TIGR01392">
    <property type="entry name" value="homoserO_Ac_trn"/>
    <property type="match status" value="1"/>
</dbReference>
<dbReference type="NCBIfam" id="NF001209">
    <property type="entry name" value="PRK00175.1"/>
    <property type="match status" value="1"/>
</dbReference>
<dbReference type="PANTHER" id="PTHR32268">
    <property type="entry name" value="HOMOSERINE O-ACETYLTRANSFERASE"/>
    <property type="match status" value="1"/>
</dbReference>
<dbReference type="PANTHER" id="PTHR32268:SF11">
    <property type="entry name" value="HOMOSERINE O-ACETYLTRANSFERASE"/>
    <property type="match status" value="1"/>
</dbReference>
<dbReference type="Pfam" id="PF00561">
    <property type="entry name" value="Abhydrolase_1"/>
    <property type="match status" value="1"/>
</dbReference>
<dbReference type="PIRSF" id="PIRSF000443">
    <property type="entry name" value="Homoser_Ac_trans"/>
    <property type="match status" value="1"/>
</dbReference>
<dbReference type="SUPFAM" id="SSF53474">
    <property type="entry name" value="alpha/beta-Hydrolases"/>
    <property type="match status" value="1"/>
</dbReference>